<gene>
    <name evidence="1" type="primary">rpoB</name>
    <name type="ordered locus">BMA10229_A1914</name>
</gene>
<accession>A2S7G6</accession>
<reference key="1">
    <citation type="journal article" date="2010" name="Genome Biol. Evol.">
        <title>Continuing evolution of Burkholderia mallei through genome reduction and large-scale rearrangements.</title>
        <authorList>
            <person name="Losada L."/>
            <person name="Ronning C.M."/>
            <person name="DeShazer D."/>
            <person name="Woods D."/>
            <person name="Fedorova N."/>
            <person name="Kim H.S."/>
            <person name="Shabalina S.A."/>
            <person name="Pearson T.R."/>
            <person name="Brinkac L."/>
            <person name="Tan P."/>
            <person name="Nandi T."/>
            <person name="Crabtree J."/>
            <person name="Badger J."/>
            <person name="Beckstrom-Sternberg S."/>
            <person name="Saqib M."/>
            <person name="Schutzer S.E."/>
            <person name="Keim P."/>
            <person name="Nierman W.C."/>
        </authorList>
    </citation>
    <scope>NUCLEOTIDE SEQUENCE [LARGE SCALE GENOMIC DNA]</scope>
    <source>
        <strain>NCTC 10229</strain>
    </source>
</reference>
<name>RPOB_BURM9</name>
<keyword id="KW-0240">DNA-directed RNA polymerase</keyword>
<keyword id="KW-0548">Nucleotidyltransferase</keyword>
<keyword id="KW-0804">Transcription</keyword>
<keyword id="KW-0808">Transferase</keyword>
<evidence type="ECO:0000255" key="1">
    <source>
        <dbReference type="HAMAP-Rule" id="MF_01321"/>
    </source>
</evidence>
<sequence length="1368" mass="153151">MQYSFTEKKRIRKSFAKRSIVHQVPFLLATQLESFSTFLQADVPTAQRKSEGLQAAFTSVFPIVSHNGFARLEFVSYALSSPAFNIKECQQRGLTYCSALRAKVRLVLLDKESPSKPVVKEVKEQEVYMGEIPLMTPTGSFVINGTERVIVSQLHRSPGVFFEHDKGKTHSSGKLLFSARIIPYRGSWLDFEFDPKDVLYFRVDRRRKMPVTILLKAIGLTPEQILANFFVFDNFTLMDEGAQMEFVPERLRGEVARFDITDREGKVIVQKDKRINAKHIRDLEAAKTKYISVPEDYLLGRVLAKNVVDGDTGEVIANANDEITEGVLEKLREAKIKEIQTLYTNDLDQGPYISSTLRVDETVDKTAARIAIYRMMRPGEPPTEEAVEALFNRLFYSEDAYDLSKVGRMKFNRRVGRDEITGPMTLQDDDILATIKILVELRNGKGEVDDIDHLGNRRVRCVGELAENQFRAGLVRVERAVKERLGQAESENLMPHDLINSKPISSAIREFFGSSQLSQFMDQTNPLSEITHKRRVSALGPGGLTRERAGFEVRDVHPTHYGRVCPIETPEGPNIGLINSLALYAHLNEYGFLETPYRKVVDSKVTDQIDYLSAIEEGRYMIAQANAAIGDDGALVDELVSSREAGETMMVTPDRIQYMDVAPSQIVSVAASLIPFLEHDDANRALMGSNMQRQAVPCLRPEKPVVGTGIERTVAVDSGTTVQALRGGVVDYVDAGRIVIRVNDDEAVAGEVGVDIYNLIKYTRSNQNTNINQRPIVKMGDKVSRGDVLADGASTDLGELALGQNMLIAFMPWNGYNFEDSILISERVVADDRYTSIHIEELNVVARDTKLGPEEITRDISNLAEVQLGRLDESGIVYIGAEVEAGDVLVGKVTPKGETQLTPEEKLLRAIFGEKASDVKDTSLRVPSGMSGTVIDVQVFTREGIQRDKRAQQIIDDELKRYRLDLNDQLRIVEGDAFQRLARMLVGKVANGGPKKLAKGTKIDQAYLEDLDHYHWFDIRLADDEAAVQLEAIKNSIEEKRHQFDLAFEEKRKKLTQGDELPPGVLKMVKVYLAVKRRLQPGDKMAGRHGNKGVVSKIVPVEDMPYMADGRPADVVLNPLGVPSRMNVGQVLEVHLGWAAKGLGWRIGEMLARQTKIEELRVFLTKIYNESGRAEDLESFSDDEILELAKNLREGVPFATPVFDGATEEEMSKMLDLAFPDDIAEQLDMNPSKNQVRLYDGRTGEPFERRVTVGYMHYLKLHHLVDDKMHARSTGPYSLVTQQPLGGKAQFGGQRFGEMEVWALEAYGASYVLQEMLTVKSDDVTGRTKVYENLVKGDHVIDAGMPESFNVLVKEIRSLGIDIDLDRN</sequence>
<comment type="function">
    <text evidence="1">DNA-dependent RNA polymerase catalyzes the transcription of DNA into RNA using the four ribonucleoside triphosphates as substrates.</text>
</comment>
<comment type="catalytic activity">
    <reaction evidence="1">
        <text>RNA(n) + a ribonucleoside 5'-triphosphate = RNA(n+1) + diphosphate</text>
        <dbReference type="Rhea" id="RHEA:21248"/>
        <dbReference type="Rhea" id="RHEA-COMP:14527"/>
        <dbReference type="Rhea" id="RHEA-COMP:17342"/>
        <dbReference type="ChEBI" id="CHEBI:33019"/>
        <dbReference type="ChEBI" id="CHEBI:61557"/>
        <dbReference type="ChEBI" id="CHEBI:140395"/>
        <dbReference type="EC" id="2.7.7.6"/>
    </reaction>
</comment>
<comment type="subunit">
    <text evidence="1">The RNAP catalytic core consists of 2 alpha, 1 beta, 1 beta' and 1 omega subunit. When a sigma factor is associated with the core the holoenzyme is formed, which can initiate transcription.</text>
</comment>
<comment type="similarity">
    <text evidence="1">Belongs to the RNA polymerase beta chain family.</text>
</comment>
<dbReference type="EC" id="2.7.7.6" evidence="1"/>
<dbReference type="EMBL" id="CP000546">
    <property type="protein sequence ID" value="ABN03098.1"/>
    <property type="molecule type" value="Genomic_DNA"/>
</dbReference>
<dbReference type="RefSeq" id="WP_004198365.1">
    <property type="nucleotide sequence ID" value="NC_008836.1"/>
</dbReference>
<dbReference type="SMR" id="A2S7G6"/>
<dbReference type="GeneID" id="92980328"/>
<dbReference type="KEGG" id="bml:BMA10229_A1914"/>
<dbReference type="HOGENOM" id="CLU_000524_4_3_4"/>
<dbReference type="Proteomes" id="UP000002283">
    <property type="component" value="Chromosome I"/>
</dbReference>
<dbReference type="GO" id="GO:0000428">
    <property type="term" value="C:DNA-directed RNA polymerase complex"/>
    <property type="evidence" value="ECO:0007669"/>
    <property type="project" value="UniProtKB-KW"/>
</dbReference>
<dbReference type="GO" id="GO:0003677">
    <property type="term" value="F:DNA binding"/>
    <property type="evidence" value="ECO:0007669"/>
    <property type="project" value="UniProtKB-UniRule"/>
</dbReference>
<dbReference type="GO" id="GO:0003899">
    <property type="term" value="F:DNA-directed RNA polymerase activity"/>
    <property type="evidence" value="ECO:0007669"/>
    <property type="project" value="UniProtKB-UniRule"/>
</dbReference>
<dbReference type="GO" id="GO:0032549">
    <property type="term" value="F:ribonucleoside binding"/>
    <property type="evidence" value="ECO:0007669"/>
    <property type="project" value="InterPro"/>
</dbReference>
<dbReference type="GO" id="GO:0006351">
    <property type="term" value="P:DNA-templated transcription"/>
    <property type="evidence" value="ECO:0007669"/>
    <property type="project" value="UniProtKB-UniRule"/>
</dbReference>
<dbReference type="CDD" id="cd00653">
    <property type="entry name" value="RNA_pol_B_RPB2"/>
    <property type="match status" value="1"/>
</dbReference>
<dbReference type="FunFam" id="2.40.50.100:FF:000006">
    <property type="entry name" value="DNA-directed RNA polymerase subunit beta"/>
    <property type="match status" value="1"/>
</dbReference>
<dbReference type="FunFam" id="2.40.50.150:FF:000001">
    <property type="entry name" value="DNA-directed RNA polymerase subunit beta"/>
    <property type="match status" value="1"/>
</dbReference>
<dbReference type="FunFam" id="3.90.1110.10:FF:000004">
    <property type="entry name" value="DNA-directed RNA polymerase subunit beta"/>
    <property type="match status" value="1"/>
</dbReference>
<dbReference type="FunFam" id="3.90.1800.10:FF:000001">
    <property type="entry name" value="DNA-directed RNA polymerase subunit beta"/>
    <property type="match status" value="1"/>
</dbReference>
<dbReference type="Gene3D" id="2.40.50.100">
    <property type="match status" value="1"/>
</dbReference>
<dbReference type="Gene3D" id="2.40.50.150">
    <property type="match status" value="1"/>
</dbReference>
<dbReference type="Gene3D" id="3.90.1100.10">
    <property type="match status" value="2"/>
</dbReference>
<dbReference type="Gene3D" id="2.30.150.10">
    <property type="entry name" value="DNA-directed RNA polymerase, beta subunit, external 1 domain"/>
    <property type="match status" value="1"/>
</dbReference>
<dbReference type="Gene3D" id="2.40.270.10">
    <property type="entry name" value="DNA-directed RNA polymerase, subunit 2, domain 6"/>
    <property type="match status" value="2"/>
</dbReference>
<dbReference type="Gene3D" id="3.90.1800.10">
    <property type="entry name" value="RNA polymerase alpha subunit dimerisation domain"/>
    <property type="match status" value="1"/>
</dbReference>
<dbReference type="Gene3D" id="3.90.1110.10">
    <property type="entry name" value="RNA polymerase Rpb2, domain 2"/>
    <property type="match status" value="2"/>
</dbReference>
<dbReference type="HAMAP" id="MF_01321">
    <property type="entry name" value="RNApol_bact_RpoB"/>
    <property type="match status" value="1"/>
</dbReference>
<dbReference type="InterPro" id="IPR042107">
    <property type="entry name" value="DNA-dir_RNA_pol_bsu_ext_1_sf"/>
</dbReference>
<dbReference type="InterPro" id="IPR019462">
    <property type="entry name" value="DNA-dir_RNA_pol_bsu_external_1"/>
</dbReference>
<dbReference type="InterPro" id="IPR015712">
    <property type="entry name" value="DNA-dir_RNA_pol_su2"/>
</dbReference>
<dbReference type="InterPro" id="IPR007120">
    <property type="entry name" value="DNA-dir_RNAP_su2_dom"/>
</dbReference>
<dbReference type="InterPro" id="IPR037033">
    <property type="entry name" value="DNA-dir_RNAP_su2_hyb_sf"/>
</dbReference>
<dbReference type="InterPro" id="IPR010243">
    <property type="entry name" value="RNA_pol_bsu_bac"/>
</dbReference>
<dbReference type="InterPro" id="IPR007121">
    <property type="entry name" value="RNA_pol_bsu_CS"/>
</dbReference>
<dbReference type="InterPro" id="IPR007644">
    <property type="entry name" value="RNA_pol_bsu_protrusion"/>
</dbReference>
<dbReference type="InterPro" id="IPR007642">
    <property type="entry name" value="RNA_pol_Rpb2_2"/>
</dbReference>
<dbReference type="InterPro" id="IPR037034">
    <property type="entry name" value="RNA_pol_Rpb2_2_sf"/>
</dbReference>
<dbReference type="InterPro" id="IPR007645">
    <property type="entry name" value="RNA_pol_Rpb2_3"/>
</dbReference>
<dbReference type="InterPro" id="IPR007641">
    <property type="entry name" value="RNA_pol_Rpb2_7"/>
</dbReference>
<dbReference type="InterPro" id="IPR014724">
    <property type="entry name" value="RNA_pol_RPB2_OB-fold"/>
</dbReference>
<dbReference type="NCBIfam" id="NF001616">
    <property type="entry name" value="PRK00405.1"/>
    <property type="match status" value="1"/>
</dbReference>
<dbReference type="NCBIfam" id="TIGR02013">
    <property type="entry name" value="rpoB"/>
    <property type="match status" value="1"/>
</dbReference>
<dbReference type="PANTHER" id="PTHR20856">
    <property type="entry name" value="DNA-DIRECTED RNA POLYMERASE I SUBUNIT 2"/>
    <property type="match status" value="1"/>
</dbReference>
<dbReference type="Pfam" id="PF04563">
    <property type="entry name" value="RNA_pol_Rpb2_1"/>
    <property type="match status" value="1"/>
</dbReference>
<dbReference type="Pfam" id="PF04561">
    <property type="entry name" value="RNA_pol_Rpb2_2"/>
    <property type="match status" value="2"/>
</dbReference>
<dbReference type="Pfam" id="PF04565">
    <property type="entry name" value="RNA_pol_Rpb2_3"/>
    <property type="match status" value="1"/>
</dbReference>
<dbReference type="Pfam" id="PF10385">
    <property type="entry name" value="RNA_pol_Rpb2_45"/>
    <property type="match status" value="1"/>
</dbReference>
<dbReference type="Pfam" id="PF00562">
    <property type="entry name" value="RNA_pol_Rpb2_6"/>
    <property type="match status" value="1"/>
</dbReference>
<dbReference type="Pfam" id="PF04560">
    <property type="entry name" value="RNA_pol_Rpb2_7"/>
    <property type="match status" value="1"/>
</dbReference>
<dbReference type="SUPFAM" id="SSF64484">
    <property type="entry name" value="beta and beta-prime subunits of DNA dependent RNA-polymerase"/>
    <property type="match status" value="1"/>
</dbReference>
<dbReference type="PROSITE" id="PS01166">
    <property type="entry name" value="RNA_POL_BETA"/>
    <property type="match status" value="1"/>
</dbReference>
<organism>
    <name type="scientific">Burkholderia mallei (strain NCTC 10229)</name>
    <dbReference type="NCBI Taxonomy" id="412022"/>
    <lineage>
        <taxon>Bacteria</taxon>
        <taxon>Pseudomonadati</taxon>
        <taxon>Pseudomonadota</taxon>
        <taxon>Betaproteobacteria</taxon>
        <taxon>Burkholderiales</taxon>
        <taxon>Burkholderiaceae</taxon>
        <taxon>Burkholderia</taxon>
        <taxon>pseudomallei group</taxon>
    </lineage>
</organism>
<protein>
    <recommendedName>
        <fullName evidence="1">DNA-directed RNA polymerase subunit beta</fullName>
        <shortName evidence="1">RNAP subunit beta</shortName>
        <ecNumber evidence="1">2.7.7.6</ecNumber>
    </recommendedName>
    <alternativeName>
        <fullName evidence="1">RNA polymerase subunit beta</fullName>
    </alternativeName>
    <alternativeName>
        <fullName evidence="1">Transcriptase subunit beta</fullName>
    </alternativeName>
</protein>
<feature type="chain" id="PRO_1000051963" description="DNA-directed RNA polymerase subunit beta">
    <location>
        <begin position="1"/>
        <end position="1368"/>
    </location>
</feature>
<proteinExistence type="inferred from homology"/>